<organism>
    <name type="scientific">Prochlorococcus marinus subsp. pastoris (strain CCMP1986 / NIES-2087 / MED4)</name>
    <dbReference type="NCBI Taxonomy" id="59919"/>
    <lineage>
        <taxon>Bacteria</taxon>
        <taxon>Bacillati</taxon>
        <taxon>Cyanobacteriota</taxon>
        <taxon>Cyanophyceae</taxon>
        <taxon>Synechococcales</taxon>
        <taxon>Prochlorococcaceae</taxon>
        <taxon>Prochlorococcus</taxon>
    </lineage>
</organism>
<feature type="chain" id="PRO_0000078516" description="Chaperone protein dnaK1">
    <location>
        <begin position="1"/>
        <end position="665"/>
    </location>
</feature>
<feature type="region of interest" description="Disordered" evidence="2">
    <location>
        <begin position="634"/>
        <end position="665"/>
    </location>
</feature>
<feature type="compositionally biased region" description="Low complexity" evidence="2">
    <location>
        <begin position="642"/>
        <end position="651"/>
    </location>
</feature>
<feature type="modified residue" description="Phosphothreonine; by autocatalysis" evidence="1">
    <location>
        <position position="198"/>
    </location>
</feature>
<protein>
    <recommendedName>
        <fullName>Chaperone protein dnaK1</fullName>
    </recommendedName>
    <alternativeName>
        <fullName>HSP70-1</fullName>
    </alternativeName>
    <alternativeName>
        <fullName>Heat shock 70 kDa protein 1</fullName>
    </alternativeName>
    <alternativeName>
        <fullName>Heat shock protein 70-1</fullName>
    </alternativeName>
</protein>
<reference key="1">
    <citation type="journal article" date="2003" name="Nature">
        <title>Genome divergence in two Prochlorococcus ecotypes reflects oceanic niche differentiation.</title>
        <authorList>
            <person name="Rocap G."/>
            <person name="Larimer F.W."/>
            <person name="Lamerdin J.E."/>
            <person name="Malfatti S."/>
            <person name="Chain P."/>
            <person name="Ahlgren N.A."/>
            <person name="Arellano A."/>
            <person name="Coleman M."/>
            <person name="Hauser L."/>
            <person name="Hess W.R."/>
            <person name="Johnson Z.I."/>
            <person name="Land M.L."/>
            <person name="Lindell D."/>
            <person name="Post A.F."/>
            <person name="Regala W."/>
            <person name="Shah M."/>
            <person name="Shaw S.L."/>
            <person name="Steglich C."/>
            <person name="Sullivan M.B."/>
            <person name="Ting C.S."/>
            <person name="Tolonen A."/>
            <person name="Webb E.A."/>
            <person name="Zinser E.R."/>
            <person name="Chisholm S.W."/>
        </authorList>
    </citation>
    <scope>NUCLEOTIDE SEQUENCE [LARGE SCALE GENOMIC DNA]</scope>
    <source>
        <strain>CCMP1986 / NIES-2087 / MED4</strain>
    </source>
</reference>
<gene>
    <name type="primary">dnaK1</name>
    <name type="ordered locus">PMM0897</name>
</gene>
<accession>Q7V1H4</accession>
<keyword id="KW-0067">ATP-binding</keyword>
<keyword id="KW-0143">Chaperone</keyword>
<keyword id="KW-0547">Nucleotide-binding</keyword>
<keyword id="KW-0597">Phosphoprotein</keyword>
<keyword id="KW-0346">Stress response</keyword>
<sequence length="665" mass="73430">MGQIVGIDLGTTNSVVGVIEAGRPVVIANSEGTRTTPSIVGFTKNSEIVIGDQARRQLVLNPKNTFYNLKRFIGRDWDELDETSISVPYNVKSNDKGSVRILSPFTEREYAPEELISSIIRKLINDAETYLGDTIDSAVITVPAYFNESQRQATKDSAVLAGIKVDRILNEPTAAALAYGFEKSSSNNVLVFDLGGGTFDVSLLRISNGVFDVKATCGDTQLGGNNFDSKIVDWIAERFLEKHKIDLRRDRQALQRLTEAAEKAKCELSGLQKTKISLPFITTSDDGPLHIEEEFDRKLFESLSDDLLDRLLEPVQIALEDSGWDAEQIDEVVLVGGSTRIPMVQQLVKTLVPNEPCQSVNPDEVVAIGAAIQSGIISGDLRDLLLNDVTPLSLGLETIGGLMKVLIPRNTPIPVRQSDVFSTSESNQSSVVVQVRQGERPLASENKSLGKFRLSGIPPAPRGIPQVQVAFDIDANGLLEVSATDRTTGRKQTVSISGGSNLNEQEINMMIAEAKSKSTEDRIKRSVIDRKNNALTLIAQAERRLRDASLEFGPYGAERQQRAVELAIQDVEEFIDDDDPQELEISVSSLQEALFGLNRRFAAEKKVDSNPLQGIKNTFGSLKDELFSDDYWDDDPWDNQMNSNSRNSRYGNSRDDDPWDNDYFL</sequence>
<dbReference type="EMBL" id="BX548174">
    <property type="protein sequence ID" value="CAE19356.1"/>
    <property type="molecule type" value="Genomic_DNA"/>
</dbReference>
<dbReference type="SMR" id="Q7V1H4"/>
<dbReference type="STRING" id="59919.PMM0897"/>
<dbReference type="KEGG" id="pmm:PMM0897"/>
<dbReference type="eggNOG" id="COG0443">
    <property type="taxonomic scope" value="Bacteria"/>
</dbReference>
<dbReference type="HOGENOM" id="CLU_005965_2_0_3"/>
<dbReference type="OrthoDB" id="9766019at2"/>
<dbReference type="Proteomes" id="UP000001026">
    <property type="component" value="Chromosome"/>
</dbReference>
<dbReference type="GO" id="GO:0005524">
    <property type="term" value="F:ATP binding"/>
    <property type="evidence" value="ECO:0007669"/>
    <property type="project" value="UniProtKB-UniRule"/>
</dbReference>
<dbReference type="GO" id="GO:0140662">
    <property type="term" value="F:ATP-dependent protein folding chaperone"/>
    <property type="evidence" value="ECO:0007669"/>
    <property type="project" value="InterPro"/>
</dbReference>
<dbReference type="GO" id="GO:0051082">
    <property type="term" value="F:unfolded protein binding"/>
    <property type="evidence" value="ECO:0007669"/>
    <property type="project" value="InterPro"/>
</dbReference>
<dbReference type="CDD" id="cd10234">
    <property type="entry name" value="ASKHA_NBD_HSP70_DnaK-like"/>
    <property type="match status" value="1"/>
</dbReference>
<dbReference type="FunFam" id="2.60.34.10:FF:000012">
    <property type="entry name" value="Heat shock 70 kDa protein"/>
    <property type="match status" value="1"/>
</dbReference>
<dbReference type="FunFam" id="3.30.420.40:FF:000004">
    <property type="entry name" value="Molecular chaperone DnaK"/>
    <property type="match status" value="1"/>
</dbReference>
<dbReference type="FunFam" id="3.90.640.10:FF:000003">
    <property type="entry name" value="Molecular chaperone DnaK"/>
    <property type="match status" value="1"/>
</dbReference>
<dbReference type="Gene3D" id="3.30.420.40">
    <property type="match status" value="2"/>
</dbReference>
<dbReference type="Gene3D" id="3.90.640.10">
    <property type="entry name" value="Actin, Chain A, domain 4"/>
    <property type="match status" value="1"/>
</dbReference>
<dbReference type="Gene3D" id="2.60.34.10">
    <property type="entry name" value="Substrate Binding Domain Of DNAk, Chain A, domain 1"/>
    <property type="match status" value="1"/>
</dbReference>
<dbReference type="HAMAP" id="MF_00332">
    <property type="entry name" value="DnaK"/>
    <property type="match status" value="1"/>
</dbReference>
<dbReference type="InterPro" id="IPR043129">
    <property type="entry name" value="ATPase_NBD"/>
</dbReference>
<dbReference type="InterPro" id="IPR012725">
    <property type="entry name" value="Chaperone_DnaK"/>
</dbReference>
<dbReference type="InterPro" id="IPR018181">
    <property type="entry name" value="Heat_shock_70_CS"/>
</dbReference>
<dbReference type="InterPro" id="IPR029047">
    <property type="entry name" value="HSP70_peptide-bd_sf"/>
</dbReference>
<dbReference type="InterPro" id="IPR013126">
    <property type="entry name" value="Hsp_70_fam"/>
</dbReference>
<dbReference type="NCBIfam" id="NF001413">
    <property type="entry name" value="PRK00290.1"/>
    <property type="match status" value="1"/>
</dbReference>
<dbReference type="NCBIfam" id="NF009946">
    <property type="entry name" value="PRK13410.1"/>
    <property type="match status" value="1"/>
</dbReference>
<dbReference type="PANTHER" id="PTHR19375">
    <property type="entry name" value="HEAT SHOCK PROTEIN 70KDA"/>
    <property type="match status" value="1"/>
</dbReference>
<dbReference type="Pfam" id="PF00012">
    <property type="entry name" value="HSP70"/>
    <property type="match status" value="1"/>
</dbReference>
<dbReference type="PRINTS" id="PR00301">
    <property type="entry name" value="HEATSHOCK70"/>
</dbReference>
<dbReference type="SUPFAM" id="SSF53067">
    <property type="entry name" value="Actin-like ATPase domain"/>
    <property type="match status" value="2"/>
</dbReference>
<dbReference type="SUPFAM" id="SSF100920">
    <property type="entry name" value="Heat shock protein 70kD (HSP70), peptide-binding domain"/>
    <property type="match status" value="1"/>
</dbReference>
<dbReference type="PROSITE" id="PS00297">
    <property type="entry name" value="HSP70_1"/>
    <property type="match status" value="1"/>
</dbReference>
<dbReference type="PROSITE" id="PS00329">
    <property type="entry name" value="HSP70_2"/>
    <property type="match status" value="1"/>
</dbReference>
<dbReference type="PROSITE" id="PS01036">
    <property type="entry name" value="HSP70_3"/>
    <property type="match status" value="1"/>
</dbReference>
<evidence type="ECO:0000250" key="1"/>
<evidence type="ECO:0000256" key="2">
    <source>
        <dbReference type="SAM" id="MobiDB-lite"/>
    </source>
</evidence>
<evidence type="ECO:0000305" key="3"/>
<comment type="function">
    <text evidence="1">Acts as a chaperone.</text>
</comment>
<comment type="induction">
    <text evidence="1">By stress conditions e.g. heat shock (By similarity).</text>
</comment>
<comment type="similarity">
    <text evidence="3">Belongs to the heat shock protein 70 family.</text>
</comment>
<proteinExistence type="inferred from homology"/>
<name>DNAK1_PROMP</name>